<gene>
    <name evidence="1" type="primary">katG</name>
    <name type="ordered locus">Nwi_0030</name>
</gene>
<protein>
    <recommendedName>
        <fullName evidence="1">Catalase-peroxidase</fullName>
        <shortName evidence="1">CP</shortName>
        <ecNumber evidence="1">1.11.1.21</ecNumber>
    </recommendedName>
    <alternativeName>
        <fullName evidence="1">Peroxidase/catalase</fullName>
    </alternativeName>
</protein>
<sequence length="729" mass="80042">MDAKTNDGKAGQCPFTSGRGHKNRDWWPEQLDVQVLHQKSNLSNPMGRDFDYASAFASLDLNAVIADLKALMTDSQDWWPADFGHYGGLMVRMAWHSAGTYRITDGRGGAGGGQQRFAPLNSWPDNVLLDRARRLLWPIKQKYGRKISWADLYVLAGNAALESMGFKPLGFAGGRVDEWEPQELFWGPEGAWLGDERYSGERELAEPLAAVQMGLIYVNPEGPNGQPDPLAAAKDIRETFLRMAMNDEETVALIAGGHTFGKTHGAGDASLVGPVPDSAPIEDQGLGWKGRFGTGKGADAIGSGLEVTWTQTPTKWDNNFFDTLFGFEWELTKSPAGAHQWRAKDAPAITPDPFDESKKHVPTMLTTDLSLRFDPIYGEISKRFHENPDQFADAFARAWFKLTHRDMGPRDRYLGPLVPKEVMIWQDPIPAVDHELVDDNDIADLKAKILASGCTVAQLVSTAWASASTFRGSDKRGGANGARIRLAPQKDWEVNQPIQLKAVLAKLEEIQAEFNDAQTGGKKVSLADLIVLGGSAAVEKAARDAGIDLKVPFTPGRMDASLDQTDVESFAPLEPRADGFRNYISDRHQFMAPEEALVDRAQLLNLTGPEMTVLVGGLRVLGANAADSRHGVFTTRPGKLTNDFFVNLLTMDTEWQPVAGQDGVYESRDRKTGTLKWTGTRVDLIFGSHSQLRAFAEVYACADSGEKFANDFAAAWAKVMNADRFDLKA</sequence>
<keyword id="KW-0349">Heme</keyword>
<keyword id="KW-0376">Hydrogen peroxide</keyword>
<keyword id="KW-0408">Iron</keyword>
<keyword id="KW-0479">Metal-binding</keyword>
<keyword id="KW-0560">Oxidoreductase</keyword>
<keyword id="KW-0575">Peroxidase</keyword>
<keyword id="KW-1185">Reference proteome</keyword>
<reference key="1">
    <citation type="journal article" date="2006" name="Appl. Environ. Microbiol.">
        <title>Genome sequence of the chemolithoautotrophic nitrite-oxidizing bacterium Nitrobacter winogradskyi Nb-255.</title>
        <authorList>
            <person name="Starkenburg S.R."/>
            <person name="Chain P.S.G."/>
            <person name="Sayavedra-Soto L.A."/>
            <person name="Hauser L."/>
            <person name="Land M.L."/>
            <person name="Larimer F.W."/>
            <person name="Malfatti S.A."/>
            <person name="Klotz M.G."/>
            <person name="Bottomley P.J."/>
            <person name="Arp D.J."/>
            <person name="Hickey W.J."/>
        </authorList>
    </citation>
    <scope>NUCLEOTIDE SEQUENCE [LARGE SCALE GENOMIC DNA]</scope>
    <source>
        <strain>ATCC 25391 / DSM 10237 / CIP 104748 / NCIMB 11846 / Nb-255</strain>
    </source>
</reference>
<feature type="chain" id="PRO_0000354850" description="Catalase-peroxidase">
    <location>
        <begin position="1"/>
        <end position="729"/>
    </location>
</feature>
<feature type="region of interest" description="Disordered" evidence="2">
    <location>
        <begin position="1"/>
        <end position="24"/>
    </location>
</feature>
<feature type="active site" description="Proton acceptor" evidence="1">
    <location>
        <position position="96"/>
    </location>
</feature>
<feature type="binding site" description="axial binding residue" evidence="1">
    <location>
        <position position="258"/>
    </location>
    <ligand>
        <name>heme b</name>
        <dbReference type="ChEBI" id="CHEBI:60344"/>
    </ligand>
    <ligandPart>
        <name>Fe</name>
        <dbReference type="ChEBI" id="CHEBI:18248"/>
    </ligandPart>
</feature>
<feature type="site" description="Transition state stabilizer" evidence="1">
    <location>
        <position position="92"/>
    </location>
</feature>
<feature type="cross-link" description="Tryptophyl-tyrosyl-methioninium (Trp-Tyr) (with M-243)" evidence="1">
    <location>
        <begin position="95"/>
        <end position="217"/>
    </location>
</feature>
<feature type="cross-link" description="Tryptophyl-tyrosyl-methioninium (Tyr-Met) (with W-95)" evidence="1">
    <location>
        <begin position="217"/>
        <end position="243"/>
    </location>
</feature>
<proteinExistence type="inferred from homology"/>
<evidence type="ECO:0000255" key="1">
    <source>
        <dbReference type="HAMAP-Rule" id="MF_01961"/>
    </source>
</evidence>
<evidence type="ECO:0000256" key="2">
    <source>
        <dbReference type="SAM" id="MobiDB-lite"/>
    </source>
</evidence>
<dbReference type="EC" id="1.11.1.21" evidence="1"/>
<dbReference type="EMBL" id="CP000115">
    <property type="protein sequence ID" value="ABA03298.1"/>
    <property type="molecule type" value="Genomic_DNA"/>
</dbReference>
<dbReference type="RefSeq" id="WP_011313369.1">
    <property type="nucleotide sequence ID" value="NC_007406.1"/>
</dbReference>
<dbReference type="SMR" id="Q3SWP3"/>
<dbReference type="STRING" id="323098.Nwi_0030"/>
<dbReference type="PeroxiBase" id="3657">
    <property type="entry name" value="NwCP01_Nb-255"/>
</dbReference>
<dbReference type="KEGG" id="nwi:Nwi_0030"/>
<dbReference type="eggNOG" id="COG0376">
    <property type="taxonomic scope" value="Bacteria"/>
</dbReference>
<dbReference type="HOGENOM" id="CLU_025424_2_0_5"/>
<dbReference type="Proteomes" id="UP000002531">
    <property type="component" value="Chromosome"/>
</dbReference>
<dbReference type="GO" id="GO:0005829">
    <property type="term" value="C:cytosol"/>
    <property type="evidence" value="ECO:0007669"/>
    <property type="project" value="TreeGrafter"/>
</dbReference>
<dbReference type="GO" id="GO:0004096">
    <property type="term" value="F:catalase activity"/>
    <property type="evidence" value="ECO:0007669"/>
    <property type="project" value="UniProtKB-UniRule"/>
</dbReference>
<dbReference type="GO" id="GO:0020037">
    <property type="term" value="F:heme binding"/>
    <property type="evidence" value="ECO:0007669"/>
    <property type="project" value="InterPro"/>
</dbReference>
<dbReference type="GO" id="GO:0046872">
    <property type="term" value="F:metal ion binding"/>
    <property type="evidence" value="ECO:0007669"/>
    <property type="project" value="UniProtKB-KW"/>
</dbReference>
<dbReference type="GO" id="GO:0070301">
    <property type="term" value="P:cellular response to hydrogen peroxide"/>
    <property type="evidence" value="ECO:0007669"/>
    <property type="project" value="TreeGrafter"/>
</dbReference>
<dbReference type="GO" id="GO:0042744">
    <property type="term" value="P:hydrogen peroxide catabolic process"/>
    <property type="evidence" value="ECO:0007669"/>
    <property type="project" value="UniProtKB-KW"/>
</dbReference>
<dbReference type="CDD" id="cd00649">
    <property type="entry name" value="catalase_peroxidase_1"/>
    <property type="match status" value="1"/>
</dbReference>
<dbReference type="CDD" id="cd08200">
    <property type="entry name" value="catalase_peroxidase_2"/>
    <property type="match status" value="1"/>
</dbReference>
<dbReference type="FunFam" id="1.10.420.10:FF:000002">
    <property type="entry name" value="Catalase-peroxidase"/>
    <property type="match status" value="1"/>
</dbReference>
<dbReference type="FunFam" id="1.10.420.10:FF:000004">
    <property type="entry name" value="Catalase-peroxidase"/>
    <property type="match status" value="1"/>
</dbReference>
<dbReference type="FunFam" id="1.10.520.10:FF:000002">
    <property type="entry name" value="Catalase-peroxidase"/>
    <property type="match status" value="1"/>
</dbReference>
<dbReference type="FunFam" id="1.10.520.10:FF:000004">
    <property type="entry name" value="Catalase-peroxidase"/>
    <property type="match status" value="1"/>
</dbReference>
<dbReference type="Gene3D" id="1.10.520.10">
    <property type="match status" value="2"/>
</dbReference>
<dbReference type="Gene3D" id="1.10.420.10">
    <property type="entry name" value="Peroxidase, domain 2"/>
    <property type="match status" value="2"/>
</dbReference>
<dbReference type="HAMAP" id="MF_01961">
    <property type="entry name" value="Catal_peroxid"/>
    <property type="match status" value="1"/>
</dbReference>
<dbReference type="InterPro" id="IPR000763">
    <property type="entry name" value="Catalase_peroxidase"/>
</dbReference>
<dbReference type="InterPro" id="IPR002016">
    <property type="entry name" value="Haem_peroxidase"/>
</dbReference>
<dbReference type="InterPro" id="IPR010255">
    <property type="entry name" value="Haem_peroxidase_sf"/>
</dbReference>
<dbReference type="InterPro" id="IPR019794">
    <property type="entry name" value="Peroxidases_AS"/>
</dbReference>
<dbReference type="InterPro" id="IPR019793">
    <property type="entry name" value="Peroxidases_heam-ligand_BS"/>
</dbReference>
<dbReference type="NCBIfam" id="TIGR00198">
    <property type="entry name" value="cat_per_HPI"/>
    <property type="match status" value="1"/>
</dbReference>
<dbReference type="NCBIfam" id="NF011635">
    <property type="entry name" value="PRK15061.1"/>
    <property type="match status" value="1"/>
</dbReference>
<dbReference type="PANTHER" id="PTHR30555:SF0">
    <property type="entry name" value="CATALASE-PEROXIDASE"/>
    <property type="match status" value="1"/>
</dbReference>
<dbReference type="PANTHER" id="PTHR30555">
    <property type="entry name" value="HYDROPEROXIDASE I, BIFUNCTIONAL CATALASE-PEROXIDASE"/>
    <property type="match status" value="1"/>
</dbReference>
<dbReference type="Pfam" id="PF00141">
    <property type="entry name" value="peroxidase"/>
    <property type="match status" value="2"/>
</dbReference>
<dbReference type="PRINTS" id="PR00460">
    <property type="entry name" value="BPEROXIDASE"/>
</dbReference>
<dbReference type="PRINTS" id="PR00458">
    <property type="entry name" value="PEROXIDASE"/>
</dbReference>
<dbReference type="SUPFAM" id="SSF48113">
    <property type="entry name" value="Heme-dependent peroxidases"/>
    <property type="match status" value="2"/>
</dbReference>
<dbReference type="PROSITE" id="PS00435">
    <property type="entry name" value="PEROXIDASE_1"/>
    <property type="match status" value="1"/>
</dbReference>
<dbReference type="PROSITE" id="PS00436">
    <property type="entry name" value="PEROXIDASE_2"/>
    <property type="match status" value="1"/>
</dbReference>
<dbReference type="PROSITE" id="PS50873">
    <property type="entry name" value="PEROXIDASE_4"/>
    <property type="match status" value="1"/>
</dbReference>
<comment type="function">
    <text evidence="1">Bifunctional enzyme with both catalase and broad-spectrum peroxidase activity.</text>
</comment>
<comment type="catalytic activity">
    <reaction evidence="1">
        <text>H2O2 + AH2 = A + 2 H2O</text>
        <dbReference type="Rhea" id="RHEA:30275"/>
        <dbReference type="ChEBI" id="CHEBI:13193"/>
        <dbReference type="ChEBI" id="CHEBI:15377"/>
        <dbReference type="ChEBI" id="CHEBI:16240"/>
        <dbReference type="ChEBI" id="CHEBI:17499"/>
        <dbReference type="EC" id="1.11.1.21"/>
    </reaction>
</comment>
<comment type="catalytic activity">
    <reaction evidence="1">
        <text>2 H2O2 = O2 + 2 H2O</text>
        <dbReference type="Rhea" id="RHEA:20309"/>
        <dbReference type="ChEBI" id="CHEBI:15377"/>
        <dbReference type="ChEBI" id="CHEBI:15379"/>
        <dbReference type="ChEBI" id="CHEBI:16240"/>
        <dbReference type="EC" id="1.11.1.21"/>
    </reaction>
</comment>
<comment type="cofactor">
    <cofactor evidence="1">
        <name>heme b</name>
        <dbReference type="ChEBI" id="CHEBI:60344"/>
    </cofactor>
    <text evidence="1">Binds 1 heme b (iron(II)-protoporphyrin IX) group per dimer.</text>
</comment>
<comment type="subunit">
    <text evidence="1">Homodimer or homotetramer.</text>
</comment>
<comment type="PTM">
    <text evidence="1">Formation of the three residue Trp-Tyr-Met cross-link is important for the catalase, but not the peroxidase activity of the enzyme.</text>
</comment>
<comment type="similarity">
    <text evidence="1">Belongs to the peroxidase family. Peroxidase/catalase subfamily.</text>
</comment>
<organism>
    <name type="scientific">Nitrobacter winogradskyi (strain ATCC 25391 / DSM 10237 / CIP 104748 / NCIMB 11846 / Nb-255)</name>
    <dbReference type="NCBI Taxonomy" id="323098"/>
    <lineage>
        <taxon>Bacteria</taxon>
        <taxon>Pseudomonadati</taxon>
        <taxon>Pseudomonadota</taxon>
        <taxon>Alphaproteobacteria</taxon>
        <taxon>Hyphomicrobiales</taxon>
        <taxon>Nitrobacteraceae</taxon>
        <taxon>Nitrobacter</taxon>
    </lineage>
</organism>
<name>KATG_NITWN</name>
<accession>Q3SWP3</accession>